<protein>
    <recommendedName>
        <fullName evidence="1">Endonuclease MutS2</fullName>
        <ecNumber evidence="1">3.1.-.-</ecNumber>
    </recommendedName>
    <alternativeName>
        <fullName evidence="1">Ribosome-associated protein quality control-upstream factor</fullName>
        <shortName evidence="1">RQC-upstream factor</shortName>
        <shortName evidence="1">RqcU</shortName>
        <ecNumber evidence="1">3.6.4.-</ecNumber>
    </alternativeName>
</protein>
<sequence length="786" mass="88135">MLERTLRVLEYNKVKEQLLEHTASSLGRDKVKNLVPSTDFEEIVEMQDTTDEAAKVIRLKGSAPLGGITDIRSNVKRAKIGSMLSPNELLDIANTMYGSRNMKRFIEDMVDNGVELPILATHVAQIVSLYDLEKKITNCIGDGGEVVDSASDKLRGIRTQIRTAESRIREKLENMTRSSNAQKMLSDSIVTIRNERYVIPVKQEYRGVYGGIVHDQSASGQTLFIEPQVIVELNNALQEARVKEKQEIERILLMLTEEVAVEADIVLSNVEVVANLDFIFAKAFYAKRIKATKPIVNNERYMDLKQARHPLIDPEIIVPNNIMLGKDFTTIVITGPNTGGKTVTLKTVGICVLMAQSGLHIPVMDESEICVFKNIFADIGDEQSIEQSLSTFSSHMVNIVDILEKADFESLVLFDELGAGTDPQEGAALAISILDEVCNRGARVVATTHYPELKAYGYNREQVINASVEFDVNTLSPTYKLLIGVPGRSNAFEISKRLGLSDRVIEQARNHISTDTNKIENMIAKLEESQKNAERDWNEAEALRKQSEKLHRELQRQIIEFNEERDERLLKAQKEGEEKVEAAKKEAEGIIQELRQLRKAQLANVKDHELIEAKSRLEGAAPELVKKQKVNVKNTAPKQQLRAGDEVKVLTFGQKGQLLEKVSDTEWSVQIGILKMKVKESNMEYINTPKQTEKKAVATVKGRDYHVSLELDLRGERFENAMARVEKYLDDAQLASYPRVSIIHGKGTGALRQGVQDYLKKHRGVKTFRYGDMGEGGLGVTVVELK</sequence>
<feature type="chain" id="PRO_1000192213" description="Endonuclease MutS2">
    <location>
        <begin position="1"/>
        <end position="786"/>
    </location>
</feature>
<feature type="domain" description="Smr" evidence="1">
    <location>
        <begin position="711"/>
        <end position="786"/>
    </location>
</feature>
<feature type="binding site" evidence="1">
    <location>
        <begin position="335"/>
        <end position="342"/>
    </location>
    <ligand>
        <name>ATP</name>
        <dbReference type="ChEBI" id="CHEBI:30616"/>
    </ligand>
</feature>
<evidence type="ECO:0000255" key="1">
    <source>
        <dbReference type="HAMAP-Rule" id="MF_00092"/>
    </source>
</evidence>
<dbReference type="EC" id="3.1.-.-" evidence="1"/>
<dbReference type="EC" id="3.6.4.-" evidence="1"/>
<dbReference type="EMBL" id="CP000227">
    <property type="protein sequence ID" value="ACM14784.1"/>
    <property type="molecule type" value="Genomic_DNA"/>
</dbReference>
<dbReference type="SMR" id="B9J054"/>
<dbReference type="KEGG" id="bcq:BCQ_4358"/>
<dbReference type="HOGENOM" id="CLU_011252_2_1_9"/>
<dbReference type="Proteomes" id="UP000000441">
    <property type="component" value="Chromosome"/>
</dbReference>
<dbReference type="GO" id="GO:0005524">
    <property type="term" value="F:ATP binding"/>
    <property type="evidence" value="ECO:0007669"/>
    <property type="project" value="UniProtKB-UniRule"/>
</dbReference>
<dbReference type="GO" id="GO:0016887">
    <property type="term" value="F:ATP hydrolysis activity"/>
    <property type="evidence" value="ECO:0007669"/>
    <property type="project" value="InterPro"/>
</dbReference>
<dbReference type="GO" id="GO:0140664">
    <property type="term" value="F:ATP-dependent DNA damage sensor activity"/>
    <property type="evidence" value="ECO:0007669"/>
    <property type="project" value="InterPro"/>
</dbReference>
<dbReference type="GO" id="GO:0004519">
    <property type="term" value="F:endonuclease activity"/>
    <property type="evidence" value="ECO:0007669"/>
    <property type="project" value="UniProtKB-UniRule"/>
</dbReference>
<dbReference type="GO" id="GO:0030983">
    <property type="term" value="F:mismatched DNA binding"/>
    <property type="evidence" value="ECO:0007669"/>
    <property type="project" value="InterPro"/>
</dbReference>
<dbReference type="GO" id="GO:0043023">
    <property type="term" value="F:ribosomal large subunit binding"/>
    <property type="evidence" value="ECO:0007669"/>
    <property type="project" value="UniProtKB-UniRule"/>
</dbReference>
<dbReference type="GO" id="GO:0019843">
    <property type="term" value="F:rRNA binding"/>
    <property type="evidence" value="ECO:0007669"/>
    <property type="project" value="UniProtKB-UniRule"/>
</dbReference>
<dbReference type="GO" id="GO:0006298">
    <property type="term" value="P:mismatch repair"/>
    <property type="evidence" value="ECO:0007669"/>
    <property type="project" value="InterPro"/>
</dbReference>
<dbReference type="GO" id="GO:0045910">
    <property type="term" value="P:negative regulation of DNA recombination"/>
    <property type="evidence" value="ECO:0007669"/>
    <property type="project" value="InterPro"/>
</dbReference>
<dbReference type="GO" id="GO:0072344">
    <property type="term" value="P:rescue of stalled ribosome"/>
    <property type="evidence" value="ECO:0007669"/>
    <property type="project" value="UniProtKB-UniRule"/>
</dbReference>
<dbReference type="CDD" id="cd03280">
    <property type="entry name" value="ABC_MutS2"/>
    <property type="match status" value="1"/>
</dbReference>
<dbReference type="CDD" id="cd06503">
    <property type="entry name" value="ATP-synt_Fo_b"/>
    <property type="match status" value="1"/>
</dbReference>
<dbReference type="FunFam" id="3.40.50.300:FF:000830">
    <property type="entry name" value="Endonuclease MutS2"/>
    <property type="match status" value="1"/>
</dbReference>
<dbReference type="Gene3D" id="1.10.1420.10">
    <property type="match status" value="2"/>
</dbReference>
<dbReference type="Gene3D" id="3.30.1370.110">
    <property type="match status" value="1"/>
</dbReference>
<dbReference type="Gene3D" id="3.40.50.300">
    <property type="entry name" value="P-loop containing nucleotide triphosphate hydrolases"/>
    <property type="match status" value="1"/>
</dbReference>
<dbReference type="HAMAP" id="MF_00092">
    <property type="entry name" value="MutS2"/>
    <property type="match status" value="1"/>
</dbReference>
<dbReference type="InterPro" id="IPR000432">
    <property type="entry name" value="DNA_mismatch_repair_MutS_C"/>
</dbReference>
<dbReference type="InterPro" id="IPR007696">
    <property type="entry name" value="DNA_mismatch_repair_MutS_core"/>
</dbReference>
<dbReference type="InterPro" id="IPR036187">
    <property type="entry name" value="DNA_mismatch_repair_MutS_sf"/>
</dbReference>
<dbReference type="InterPro" id="IPR046893">
    <property type="entry name" value="MSSS"/>
</dbReference>
<dbReference type="InterPro" id="IPR045076">
    <property type="entry name" value="MutS"/>
</dbReference>
<dbReference type="InterPro" id="IPR005747">
    <property type="entry name" value="MutS2"/>
</dbReference>
<dbReference type="InterPro" id="IPR027417">
    <property type="entry name" value="P-loop_NTPase"/>
</dbReference>
<dbReference type="InterPro" id="IPR002625">
    <property type="entry name" value="Smr_dom"/>
</dbReference>
<dbReference type="InterPro" id="IPR036063">
    <property type="entry name" value="Smr_dom_sf"/>
</dbReference>
<dbReference type="NCBIfam" id="TIGR01069">
    <property type="entry name" value="mutS2"/>
    <property type="match status" value="1"/>
</dbReference>
<dbReference type="PANTHER" id="PTHR48466:SF2">
    <property type="entry name" value="OS10G0509000 PROTEIN"/>
    <property type="match status" value="1"/>
</dbReference>
<dbReference type="PANTHER" id="PTHR48466">
    <property type="entry name" value="OS10G0509000 PROTEIN-RELATED"/>
    <property type="match status" value="1"/>
</dbReference>
<dbReference type="Pfam" id="PF20297">
    <property type="entry name" value="MSSS"/>
    <property type="match status" value="1"/>
</dbReference>
<dbReference type="Pfam" id="PF00488">
    <property type="entry name" value="MutS_V"/>
    <property type="match status" value="1"/>
</dbReference>
<dbReference type="Pfam" id="PF01713">
    <property type="entry name" value="Smr"/>
    <property type="match status" value="1"/>
</dbReference>
<dbReference type="PIRSF" id="PIRSF005814">
    <property type="entry name" value="MutS_YshD"/>
    <property type="match status" value="1"/>
</dbReference>
<dbReference type="SMART" id="SM00534">
    <property type="entry name" value="MUTSac"/>
    <property type="match status" value="1"/>
</dbReference>
<dbReference type="SMART" id="SM00533">
    <property type="entry name" value="MUTSd"/>
    <property type="match status" value="1"/>
</dbReference>
<dbReference type="SMART" id="SM00463">
    <property type="entry name" value="SMR"/>
    <property type="match status" value="1"/>
</dbReference>
<dbReference type="SUPFAM" id="SSF48334">
    <property type="entry name" value="DNA repair protein MutS, domain III"/>
    <property type="match status" value="1"/>
</dbReference>
<dbReference type="SUPFAM" id="SSF52540">
    <property type="entry name" value="P-loop containing nucleoside triphosphate hydrolases"/>
    <property type="match status" value="1"/>
</dbReference>
<dbReference type="SUPFAM" id="SSF160443">
    <property type="entry name" value="SMR domain-like"/>
    <property type="match status" value="1"/>
</dbReference>
<dbReference type="PROSITE" id="PS00486">
    <property type="entry name" value="DNA_MISMATCH_REPAIR_2"/>
    <property type="match status" value="1"/>
</dbReference>
<dbReference type="PROSITE" id="PS50828">
    <property type="entry name" value="SMR"/>
    <property type="match status" value="1"/>
</dbReference>
<gene>
    <name evidence="1" type="primary">mutS2</name>
    <name evidence="1" type="synonym">rqcU</name>
    <name type="ordered locus">BCQ_4358</name>
</gene>
<comment type="function">
    <text evidence="1">Endonuclease that is involved in the suppression of homologous recombination and thus may have a key role in the control of bacterial genetic diversity.</text>
</comment>
<comment type="function">
    <text evidence="1">Acts as a ribosome collision sensor, splitting the ribosome into its 2 subunits. Detects stalled/collided 70S ribosomes which it binds and splits by an ATP-hydrolysis driven conformational change. Acts upstream of the ribosome quality control system (RQC), a ribosome-associated complex that mediates the extraction of incompletely synthesized nascent chains from stalled ribosomes and their subsequent degradation. Probably generates substrates for RQC.</text>
</comment>
<comment type="subunit">
    <text evidence="1">Homodimer. Binds to stalled ribosomes, contacting rRNA.</text>
</comment>
<comment type="similarity">
    <text evidence="1">Belongs to the DNA mismatch repair MutS family. MutS2 subfamily.</text>
</comment>
<reference key="1">
    <citation type="journal article" date="2009" name="J. Bacteriol.">
        <title>Complete genome sequence of the extremophilic Bacillus cereus strain Q1 with industrial applications.</title>
        <authorList>
            <person name="Xiong Z."/>
            <person name="Jiang Y."/>
            <person name="Qi D."/>
            <person name="Lu H."/>
            <person name="Yang F."/>
            <person name="Yang J."/>
            <person name="Chen L."/>
            <person name="Sun L."/>
            <person name="Xu X."/>
            <person name="Xue Y."/>
            <person name="Zhu Y."/>
            <person name="Jin Q."/>
        </authorList>
    </citation>
    <scope>NUCLEOTIDE SEQUENCE [LARGE SCALE GENOMIC DNA]</scope>
    <source>
        <strain>Q1</strain>
    </source>
</reference>
<name>MUTS2_BACCQ</name>
<keyword id="KW-0067">ATP-binding</keyword>
<keyword id="KW-0238">DNA-binding</keyword>
<keyword id="KW-0255">Endonuclease</keyword>
<keyword id="KW-0378">Hydrolase</keyword>
<keyword id="KW-0540">Nuclease</keyword>
<keyword id="KW-0547">Nucleotide-binding</keyword>
<keyword id="KW-0694">RNA-binding</keyword>
<keyword id="KW-0699">rRNA-binding</keyword>
<accession>B9J054</accession>
<organism>
    <name type="scientific">Bacillus cereus (strain Q1)</name>
    <dbReference type="NCBI Taxonomy" id="361100"/>
    <lineage>
        <taxon>Bacteria</taxon>
        <taxon>Bacillati</taxon>
        <taxon>Bacillota</taxon>
        <taxon>Bacilli</taxon>
        <taxon>Bacillales</taxon>
        <taxon>Bacillaceae</taxon>
        <taxon>Bacillus</taxon>
        <taxon>Bacillus cereus group</taxon>
    </lineage>
</organism>
<proteinExistence type="inferred from homology"/>